<protein>
    <recommendedName>
        <fullName>NAD(P) transhydrogenase subunit alpha part 2</fullName>
        <ecNumber evidence="2">7.1.1.1</ecNumber>
    </recommendedName>
    <alternativeName>
        <fullName>Nicotinamide nucleotide transhydrogenase subunit alpha 2</fullName>
    </alternativeName>
    <alternativeName>
        <fullName>Proton-translocating transhydrogenase component 2</fullName>
    </alternativeName>
    <alternativeName>
        <fullName>Pyridine nucleotide transhydrogenase subunit alpha 2</fullName>
    </alternativeName>
    <alternativeName>
        <fullName>dII</fullName>
    </alternativeName>
</protein>
<gene>
    <name type="primary">pntAB</name>
    <name type="synonym">nntA2</name>
</gene>
<proteinExistence type="inferred from homology"/>
<reference key="1">
    <citation type="journal article" date="1994" name="J. Bioenerg. Biomembr.">
        <title>Energy-transducing nicotinamide nucleotide transhydrogenase: nucleotide sequences of the genes and predicted amino acid sequences of the subunits of the enzyme from Rhodospirillum rubrum.</title>
        <authorList>
            <person name="Yamaguchi M."/>
            <person name="Hatefi Y."/>
        </authorList>
    </citation>
    <scope>NUCLEOTIDE SEQUENCE [GENOMIC DNA]</scope>
</reference>
<accession>P0C187</accession>
<accession>Q59762</accession>
<accession>Q59764</accession>
<sequence>MEDKNILVEGFNQLSQQALELSQHAQALALQASHAVLPAAAATEGASEFWWLMTVFVLACFIGFYVVWSVTPALHSPLMGVTNAISSVIVVGALIATGPEAFSASKVLGFFAILLASVNIFGGFIVTQRMLAMFKKKQK</sequence>
<keyword id="KW-0997">Cell inner membrane</keyword>
<keyword id="KW-1003">Cell membrane</keyword>
<keyword id="KW-0472">Membrane</keyword>
<keyword id="KW-0520">NAD</keyword>
<keyword id="KW-0521">NADP</keyword>
<keyword id="KW-1278">Translocase</keyword>
<keyword id="KW-0812">Transmembrane</keyword>
<keyword id="KW-1133">Transmembrane helix</keyword>
<organism>
    <name type="scientific">Rhodospirillum rubrum</name>
    <dbReference type="NCBI Taxonomy" id="1085"/>
    <lineage>
        <taxon>Bacteria</taxon>
        <taxon>Pseudomonadati</taxon>
        <taxon>Pseudomonadota</taxon>
        <taxon>Alphaproteobacteria</taxon>
        <taxon>Rhodospirillales</taxon>
        <taxon>Rhodospirillaceae</taxon>
        <taxon>Rhodospirillum</taxon>
    </lineage>
</organism>
<feature type="chain" id="PRO_0000199021" description="NAD(P) transhydrogenase subunit alpha part 2">
    <location>
        <begin position="1"/>
        <end position="139"/>
    </location>
</feature>
<feature type="transmembrane region" description="Helical" evidence="3">
    <location>
        <begin position="49"/>
        <end position="69"/>
    </location>
</feature>
<feature type="transmembrane region" description="Helical" evidence="3">
    <location>
        <begin position="78"/>
        <end position="98"/>
    </location>
</feature>
<feature type="transmembrane region" description="Helical" evidence="3">
    <location>
        <begin position="107"/>
        <end position="127"/>
    </location>
</feature>
<evidence type="ECO:0000250" key="1"/>
<evidence type="ECO:0000250" key="2">
    <source>
        <dbReference type="UniProtKB" id="Q2RSB2"/>
    </source>
</evidence>
<evidence type="ECO:0000255" key="3"/>
<name>PNTAB_RHORU</name>
<comment type="function">
    <text evidence="1">The transhydrogenation between NADH and NADP is coupled to respiration and ATP hydrolysis and functions as a proton pump across the membrane.</text>
</comment>
<comment type="catalytic activity">
    <reaction evidence="2">
        <text>NAD(+) + NADPH + H(+)(in) = NADH + NADP(+) + H(+)(out)</text>
        <dbReference type="Rhea" id="RHEA:47992"/>
        <dbReference type="ChEBI" id="CHEBI:15378"/>
        <dbReference type="ChEBI" id="CHEBI:57540"/>
        <dbReference type="ChEBI" id="CHEBI:57783"/>
        <dbReference type="ChEBI" id="CHEBI:57945"/>
        <dbReference type="ChEBI" id="CHEBI:58349"/>
        <dbReference type="EC" id="7.1.1.1"/>
    </reaction>
</comment>
<comment type="subunit">
    <text>Complex of an alpha and a beta chain; in Rhodospirillum, the alpha chain seems to be made of two subunits.</text>
</comment>
<comment type="subcellular location">
    <subcellularLocation>
        <location evidence="1">Cell inner membrane</location>
        <topology evidence="1">Multi-pass membrane protein</topology>
    </subcellularLocation>
</comment>
<dbReference type="EC" id="7.1.1.1" evidence="2"/>
<dbReference type="EMBL" id="U01158">
    <property type="protein sequence ID" value="AAC43256.1"/>
    <property type="molecule type" value="Genomic_DNA"/>
</dbReference>
<dbReference type="RefSeq" id="WP_011390031.1">
    <property type="nucleotide sequence ID" value="NZ_DAMDTZ010000090.1"/>
</dbReference>
<dbReference type="SMR" id="P0C187"/>
<dbReference type="TCDB" id="3.D.2.2.1">
    <property type="family name" value="the proton-translocating transhydrogenase (pth) family"/>
</dbReference>
<dbReference type="OMA" id="LACVNIF"/>
<dbReference type="GO" id="GO:0005886">
    <property type="term" value="C:plasma membrane"/>
    <property type="evidence" value="ECO:0007669"/>
    <property type="project" value="UniProtKB-SubCell"/>
</dbReference>
<dbReference type="GO" id="GO:0050661">
    <property type="term" value="F:NADP binding"/>
    <property type="evidence" value="ECO:0007669"/>
    <property type="project" value="TreeGrafter"/>
</dbReference>
<dbReference type="GO" id="GO:0008750">
    <property type="term" value="F:proton-translocating NAD(P)+ transhydrogenase activity"/>
    <property type="evidence" value="ECO:0007669"/>
    <property type="project" value="UniProtKB-EC"/>
</dbReference>
<dbReference type="GO" id="GO:0006740">
    <property type="term" value="P:NADPH regeneration"/>
    <property type="evidence" value="ECO:0000303"/>
    <property type="project" value="UniProtKB"/>
</dbReference>
<dbReference type="InterPro" id="IPR024605">
    <property type="entry name" value="NADP_transhyd_a_C"/>
</dbReference>
<dbReference type="PANTHER" id="PTHR10160">
    <property type="entry name" value="NAD(P) TRANSHYDROGENASE"/>
    <property type="match status" value="1"/>
</dbReference>
<dbReference type="PANTHER" id="PTHR10160:SF19">
    <property type="entry name" value="PROTON-TRANSLOCATING NAD(P)(+) TRANSHYDROGENASE"/>
    <property type="match status" value="1"/>
</dbReference>
<dbReference type="Pfam" id="PF12769">
    <property type="entry name" value="PNTB_4TM"/>
    <property type="match status" value="1"/>
</dbReference>